<gene>
    <name type="ordered locus">MAB_2888c</name>
</gene>
<proteinExistence type="inferred from homology"/>
<feature type="chain" id="PRO_1000132217" description="Probable transcriptional regulatory protein MAB_2888c">
    <location>
        <begin position="1"/>
        <end position="251"/>
    </location>
</feature>
<feature type="region of interest" description="Disordered" evidence="2">
    <location>
        <begin position="1"/>
        <end position="20"/>
    </location>
</feature>
<keyword id="KW-0963">Cytoplasm</keyword>
<keyword id="KW-0238">DNA-binding</keyword>
<keyword id="KW-1185">Reference proteome</keyword>
<keyword id="KW-0804">Transcription</keyword>
<keyword id="KW-0805">Transcription regulation</keyword>
<sequence length="251" mass="26954">MSGHSKWATTKHQKAVKDARRGKEFAKLIKNIEVAARTGGGDPAGNPTLYDAIQKAKKTSVPNDNIERARKRGAGEEAGGADWQTIMYEGYGPNGVAVLIECLSDNRNRAAGEVRVAMTRNGGSMADPGSVSYLFSRKGVVTLEKNSLSEDDVLTAVLEAGAEEVNDLGETFEVISEPTDLVAVRQALQEAGIDYESAEASFQPSMSVPVDVETARKVFKLVDALEDSDDVQNVYTNVDLSDEVLAALDED</sequence>
<reference key="1">
    <citation type="journal article" date="2009" name="PLoS ONE">
        <title>Non mycobacterial virulence genes in the genome of the emerging pathogen Mycobacterium abscessus.</title>
        <authorList>
            <person name="Ripoll F."/>
            <person name="Pasek S."/>
            <person name="Schenowitz C."/>
            <person name="Dossat C."/>
            <person name="Barbe V."/>
            <person name="Rottman M."/>
            <person name="Macheras E."/>
            <person name="Heym B."/>
            <person name="Herrmann J.L."/>
            <person name="Daffe M."/>
            <person name="Brosch R."/>
            <person name="Risler J.L."/>
            <person name="Gaillard J.L."/>
        </authorList>
    </citation>
    <scope>NUCLEOTIDE SEQUENCE [LARGE SCALE GENOMIC DNA]</scope>
    <source>
        <strain>ATCC 19977 / DSM 44196 / CCUG 20993 / CIP 104536 / JCM 13569 / NCTC 13031 / TMC 1543 / L948</strain>
    </source>
</reference>
<name>Y2888_MYCA9</name>
<accession>B1MCJ6</accession>
<protein>
    <recommendedName>
        <fullName evidence="1">Probable transcriptional regulatory protein MAB_2888c</fullName>
    </recommendedName>
</protein>
<evidence type="ECO:0000255" key="1">
    <source>
        <dbReference type="HAMAP-Rule" id="MF_00693"/>
    </source>
</evidence>
<evidence type="ECO:0000256" key="2">
    <source>
        <dbReference type="SAM" id="MobiDB-lite"/>
    </source>
</evidence>
<organism>
    <name type="scientific">Mycobacteroides abscessus (strain ATCC 19977 / DSM 44196 / CCUG 20993 / CIP 104536 / JCM 13569 / NCTC 13031 / TMC 1543 / L948)</name>
    <name type="common">Mycobacterium abscessus</name>
    <dbReference type="NCBI Taxonomy" id="561007"/>
    <lineage>
        <taxon>Bacteria</taxon>
        <taxon>Bacillati</taxon>
        <taxon>Actinomycetota</taxon>
        <taxon>Actinomycetes</taxon>
        <taxon>Mycobacteriales</taxon>
        <taxon>Mycobacteriaceae</taxon>
        <taxon>Mycobacteroides</taxon>
        <taxon>Mycobacteroides abscessus</taxon>
    </lineage>
</organism>
<dbReference type="EMBL" id="CU458896">
    <property type="protein sequence ID" value="CAM62967.1"/>
    <property type="molecule type" value="Genomic_DNA"/>
</dbReference>
<dbReference type="RefSeq" id="WP_005057545.1">
    <property type="nucleotide sequence ID" value="NZ_MLCG01000003.1"/>
</dbReference>
<dbReference type="SMR" id="B1MCJ6"/>
<dbReference type="GeneID" id="93379819"/>
<dbReference type="KEGG" id="mab:MAB_2888c"/>
<dbReference type="Proteomes" id="UP000007137">
    <property type="component" value="Chromosome"/>
</dbReference>
<dbReference type="GO" id="GO:0005829">
    <property type="term" value="C:cytosol"/>
    <property type="evidence" value="ECO:0007669"/>
    <property type="project" value="TreeGrafter"/>
</dbReference>
<dbReference type="GO" id="GO:0003677">
    <property type="term" value="F:DNA binding"/>
    <property type="evidence" value="ECO:0007669"/>
    <property type="project" value="UniProtKB-UniRule"/>
</dbReference>
<dbReference type="GO" id="GO:0006355">
    <property type="term" value="P:regulation of DNA-templated transcription"/>
    <property type="evidence" value="ECO:0007669"/>
    <property type="project" value="UniProtKB-UniRule"/>
</dbReference>
<dbReference type="FunFam" id="1.10.10.200:FF:000002">
    <property type="entry name" value="Probable transcriptional regulatory protein CLM62_37755"/>
    <property type="match status" value="1"/>
</dbReference>
<dbReference type="FunFam" id="3.30.70.980:FF:000006">
    <property type="entry name" value="Probable transcriptional regulatory protein J113_18170"/>
    <property type="match status" value="1"/>
</dbReference>
<dbReference type="Gene3D" id="1.10.10.200">
    <property type="match status" value="1"/>
</dbReference>
<dbReference type="Gene3D" id="3.30.70.980">
    <property type="match status" value="2"/>
</dbReference>
<dbReference type="HAMAP" id="MF_00693">
    <property type="entry name" value="Transcrip_reg_TACO1"/>
    <property type="match status" value="1"/>
</dbReference>
<dbReference type="InterPro" id="IPR017856">
    <property type="entry name" value="Integrase-like_N"/>
</dbReference>
<dbReference type="InterPro" id="IPR048300">
    <property type="entry name" value="TACO1_YebC-like_2nd/3rd_dom"/>
</dbReference>
<dbReference type="InterPro" id="IPR049083">
    <property type="entry name" value="TACO1_YebC_N"/>
</dbReference>
<dbReference type="InterPro" id="IPR002876">
    <property type="entry name" value="Transcrip_reg_TACO1-like"/>
</dbReference>
<dbReference type="InterPro" id="IPR026564">
    <property type="entry name" value="Transcrip_reg_TACO1-like_dom3"/>
</dbReference>
<dbReference type="InterPro" id="IPR029072">
    <property type="entry name" value="YebC-like"/>
</dbReference>
<dbReference type="NCBIfam" id="NF001030">
    <property type="entry name" value="PRK00110.1"/>
    <property type="match status" value="1"/>
</dbReference>
<dbReference type="NCBIfam" id="NF009044">
    <property type="entry name" value="PRK12378.1"/>
    <property type="match status" value="1"/>
</dbReference>
<dbReference type="NCBIfam" id="TIGR01033">
    <property type="entry name" value="YebC/PmpR family DNA-binding transcriptional regulator"/>
    <property type="match status" value="1"/>
</dbReference>
<dbReference type="PANTHER" id="PTHR12532:SF6">
    <property type="entry name" value="TRANSCRIPTIONAL REGULATORY PROTEIN YEBC-RELATED"/>
    <property type="match status" value="1"/>
</dbReference>
<dbReference type="PANTHER" id="PTHR12532">
    <property type="entry name" value="TRANSLATIONAL ACTIVATOR OF CYTOCHROME C OXIDASE 1"/>
    <property type="match status" value="1"/>
</dbReference>
<dbReference type="Pfam" id="PF20772">
    <property type="entry name" value="TACO1_YebC_N"/>
    <property type="match status" value="1"/>
</dbReference>
<dbReference type="Pfam" id="PF01709">
    <property type="entry name" value="Transcrip_reg"/>
    <property type="match status" value="1"/>
</dbReference>
<dbReference type="SUPFAM" id="SSF75625">
    <property type="entry name" value="YebC-like"/>
    <property type="match status" value="1"/>
</dbReference>
<comment type="subcellular location">
    <subcellularLocation>
        <location evidence="1">Cytoplasm</location>
    </subcellularLocation>
</comment>
<comment type="similarity">
    <text evidence="1">Belongs to the TACO1 family.</text>
</comment>